<evidence type="ECO:0000255" key="1">
    <source>
        <dbReference type="HAMAP-Rule" id="MF_00744"/>
    </source>
</evidence>
<reference key="1">
    <citation type="journal article" date="2001" name="Proc. Natl. Acad. Sci. U.S.A.">
        <title>Complete genomic sequence of Pasteurella multocida Pm70.</title>
        <authorList>
            <person name="May B.J."/>
            <person name="Zhang Q."/>
            <person name="Li L.L."/>
            <person name="Paustian M.L."/>
            <person name="Whittam T.S."/>
            <person name="Kapur V."/>
        </authorList>
    </citation>
    <scope>NUCLEOTIDE SEQUENCE [LARGE SCALE GENOMIC DNA]</scope>
    <source>
        <strain>Pm70</strain>
    </source>
</reference>
<name>METJ_PASMU</name>
<keyword id="KW-0028">Amino-acid biosynthesis</keyword>
<keyword id="KW-0963">Cytoplasm</keyword>
<keyword id="KW-0238">DNA-binding</keyword>
<keyword id="KW-0486">Methionine biosynthesis</keyword>
<keyword id="KW-1185">Reference proteome</keyword>
<keyword id="KW-0678">Repressor</keyword>
<keyword id="KW-0804">Transcription</keyword>
<keyword id="KW-0805">Transcription regulation</keyword>
<dbReference type="EMBL" id="AE004439">
    <property type="protein sequence ID" value="AAK03374.1"/>
    <property type="molecule type" value="Genomic_DNA"/>
</dbReference>
<dbReference type="RefSeq" id="WP_005723835.1">
    <property type="nucleotide sequence ID" value="NC_002663.1"/>
</dbReference>
<dbReference type="SMR" id="Q9CLE7"/>
<dbReference type="STRING" id="272843.PM1290"/>
<dbReference type="EnsemblBacteria" id="AAK03374">
    <property type="protein sequence ID" value="AAK03374"/>
    <property type="gene ID" value="PM1290"/>
</dbReference>
<dbReference type="GeneID" id="77206756"/>
<dbReference type="KEGG" id="pmu:PM1290"/>
<dbReference type="HOGENOM" id="CLU_142318_0_0_6"/>
<dbReference type="OrthoDB" id="5680896at2"/>
<dbReference type="Proteomes" id="UP000000809">
    <property type="component" value="Chromosome"/>
</dbReference>
<dbReference type="GO" id="GO:0005737">
    <property type="term" value="C:cytoplasm"/>
    <property type="evidence" value="ECO:0007669"/>
    <property type="project" value="UniProtKB-SubCell"/>
</dbReference>
<dbReference type="GO" id="GO:0003677">
    <property type="term" value="F:DNA binding"/>
    <property type="evidence" value="ECO:0007669"/>
    <property type="project" value="UniProtKB-KW"/>
</dbReference>
<dbReference type="GO" id="GO:0003700">
    <property type="term" value="F:DNA-binding transcription factor activity"/>
    <property type="evidence" value="ECO:0007669"/>
    <property type="project" value="InterPro"/>
</dbReference>
<dbReference type="GO" id="GO:0009086">
    <property type="term" value="P:methionine biosynthetic process"/>
    <property type="evidence" value="ECO:0007669"/>
    <property type="project" value="UniProtKB-UniRule"/>
</dbReference>
<dbReference type="GO" id="GO:0045892">
    <property type="term" value="P:negative regulation of DNA-templated transcription"/>
    <property type="evidence" value="ECO:0007669"/>
    <property type="project" value="UniProtKB-UniRule"/>
</dbReference>
<dbReference type="Gene3D" id="1.10.140.10">
    <property type="entry name" value="MET Apo-Repressor, subunit A"/>
    <property type="match status" value="1"/>
</dbReference>
<dbReference type="HAMAP" id="MF_00744">
    <property type="entry name" value="MetJ"/>
    <property type="match status" value="1"/>
</dbReference>
<dbReference type="InterPro" id="IPR002084">
    <property type="entry name" value="Met_repressor_MetJ"/>
</dbReference>
<dbReference type="InterPro" id="IPR023453">
    <property type="entry name" value="Met_repressor_MetJ_dom_sf"/>
</dbReference>
<dbReference type="InterPro" id="IPR010985">
    <property type="entry name" value="Ribbon_hlx_hlx"/>
</dbReference>
<dbReference type="NCBIfam" id="NF003622">
    <property type="entry name" value="PRK05264.1"/>
    <property type="match status" value="1"/>
</dbReference>
<dbReference type="Pfam" id="PF01340">
    <property type="entry name" value="MetJ"/>
    <property type="match status" value="1"/>
</dbReference>
<dbReference type="SUPFAM" id="SSF47598">
    <property type="entry name" value="Ribbon-helix-helix"/>
    <property type="match status" value="1"/>
</dbReference>
<feature type="chain" id="PRO_0000198402" description="Met repressor">
    <location>
        <begin position="1"/>
        <end position="105"/>
    </location>
</feature>
<gene>
    <name evidence="1" type="primary">metJ</name>
    <name type="ordered locus">PM1290</name>
</gene>
<proteinExistence type="inferred from homology"/>
<sequence>MANWDGKYISPYAEHGKKSEQVKKITVSIPIKVLEILTNERTRRQIRNLRHATNSELLCEAFLHAFTGQPLPTDEDLLKERHDEIPEQAKQVMRELGIDPEKWEY</sequence>
<comment type="function">
    <text evidence="1">This regulatory protein, when combined with SAM (S-adenosylmethionine) represses the expression of the methionine regulon and of enzymes involved in SAM synthesis.</text>
</comment>
<comment type="subunit">
    <text evidence="1">Homodimer.</text>
</comment>
<comment type="subcellular location">
    <subcellularLocation>
        <location evidence="1">Cytoplasm</location>
    </subcellularLocation>
</comment>
<comment type="domain">
    <text>Does not bind DNA by a helix-turn-helix motif.</text>
</comment>
<comment type="similarity">
    <text evidence="1">Belongs to the MetJ family.</text>
</comment>
<organism>
    <name type="scientific">Pasteurella multocida (strain Pm70)</name>
    <dbReference type="NCBI Taxonomy" id="272843"/>
    <lineage>
        <taxon>Bacteria</taxon>
        <taxon>Pseudomonadati</taxon>
        <taxon>Pseudomonadota</taxon>
        <taxon>Gammaproteobacteria</taxon>
        <taxon>Pasteurellales</taxon>
        <taxon>Pasteurellaceae</taxon>
        <taxon>Pasteurella</taxon>
    </lineage>
</organism>
<accession>Q9CLE7</accession>
<protein>
    <recommendedName>
        <fullName evidence="1">Met repressor</fullName>
    </recommendedName>
    <alternativeName>
        <fullName evidence="1">Met regulon regulatory protein MetJ</fullName>
    </alternativeName>
</protein>